<accession>Q64662</accession>
<reference key="1">
    <citation type="journal article" date="1994" name="Cancer Res.">
        <title>State of the p53 gene in hepatocellular carcinomas of ground squirrels and woodchucks with past and ongoing infection with hepadnaviruses.</title>
        <authorList>
            <person name="Rivkina M.B."/>
            <person name="Cullen J.M."/>
            <person name="Robinson W.S."/>
            <person name="Marion P.L."/>
        </authorList>
    </citation>
    <scope>NUCLEOTIDE SEQUENCE [MRNA]</scope>
    <source>
        <tissue>Thymus</tissue>
    </source>
</reference>
<gene>
    <name type="primary">TP53</name>
</gene>
<keyword id="KW-0007">Acetylation</keyword>
<keyword id="KW-0010">Activator</keyword>
<keyword id="KW-0053">Apoptosis</keyword>
<keyword id="KW-0090">Biological rhythms</keyword>
<keyword id="KW-0131">Cell cycle</keyword>
<keyword id="KW-0963">Cytoplasm</keyword>
<keyword id="KW-0206">Cytoskeleton</keyword>
<keyword id="KW-0238">DNA-binding</keyword>
<keyword id="KW-0256">Endoplasmic reticulum</keyword>
<keyword id="KW-1017">Isopeptide bond</keyword>
<keyword id="KW-0479">Metal-binding</keyword>
<keyword id="KW-0488">Methylation</keyword>
<keyword id="KW-0496">Mitochondrion</keyword>
<keyword id="KW-1210">Necrosis</keyword>
<keyword id="KW-0539">Nucleus</keyword>
<keyword id="KW-0597">Phosphoprotein</keyword>
<keyword id="KW-0678">Repressor</keyword>
<keyword id="KW-0804">Transcription</keyword>
<keyword id="KW-0805">Transcription regulation</keyword>
<keyword id="KW-0043">Tumor suppressor</keyword>
<keyword id="KW-0832">Ubl conjugation</keyword>
<keyword id="KW-0862">Zinc</keyword>
<organism>
    <name type="scientific">Otospermophilus beecheyi</name>
    <name type="common">California ground squirrel</name>
    <name type="synonym">Spermophilus beecheyi</name>
    <dbReference type="NCBI Taxonomy" id="34862"/>
    <lineage>
        <taxon>Eukaryota</taxon>
        <taxon>Metazoa</taxon>
        <taxon>Chordata</taxon>
        <taxon>Craniata</taxon>
        <taxon>Vertebrata</taxon>
        <taxon>Euteleostomi</taxon>
        <taxon>Mammalia</taxon>
        <taxon>Eutheria</taxon>
        <taxon>Euarchontoglires</taxon>
        <taxon>Glires</taxon>
        <taxon>Rodentia</taxon>
        <taxon>Sciuromorpha</taxon>
        <taxon>Sciuridae</taxon>
        <taxon>Xerinae</taxon>
        <taxon>Marmotini</taxon>
        <taxon>Otospermophilus</taxon>
    </lineage>
</organism>
<dbReference type="EMBL" id="U43902">
    <property type="protein sequence ID" value="AAA85628.1"/>
    <property type="molecule type" value="mRNA"/>
</dbReference>
<dbReference type="SMR" id="Q64662"/>
<dbReference type="GO" id="GO:0005813">
    <property type="term" value="C:centrosome"/>
    <property type="evidence" value="ECO:0000250"/>
    <property type="project" value="UniProtKB"/>
</dbReference>
<dbReference type="GO" id="GO:0005737">
    <property type="term" value="C:cytoplasm"/>
    <property type="evidence" value="ECO:0000250"/>
    <property type="project" value="UniProtKB"/>
</dbReference>
<dbReference type="GO" id="GO:0005783">
    <property type="term" value="C:endoplasmic reticulum"/>
    <property type="evidence" value="ECO:0007669"/>
    <property type="project" value="UniProtKB-SubCell"/>
</dbReference>
<dbReference type="GO" id="GO:0005759">
    <property type="term" value="C:mitochondrial matrix"/>
    <property type="evidence" value="ECO:0007669"/>
    <property type="project" value="UniProtKB-SubCell"/>
</dbReference>
<dbReference type="GO" id="GO:0005739">
    <property type="term" value="C:mitochondrion"/>
    <property type="evidence" value="ECO:0000250"/>
    <property type="project" value="UniProtKB"/>
</dbReference>
<dbReference type="GO" id="GO:0005634">
    <property type="term" value="C:nucleus"/>
    <property type="evidence" value="ECO:0000250"/>
    <property type="project" value="UniProtKB"/>
</dbReference>
<dbReference type="GO" id="GO:0016605">
    <property type="term" value="C:PML body"/>
    <property type="evidence" value="ECO:0007669"/>
    <property type="project" value="UniProtKB-SubCell"/>
</dbReference>
<dbReference type="GO" id="GO:0000981">
    <property type="term" value="F:DNA-binding transcription factor activity, RNA polymerase II-specific"/>
    <property type="evidence" value="ECO:0000250"/>
    <property type="project" value="UniProtKB"/>
</dbReference>
<dbReference type="GO" id="GO:0046872">
    <property type="term" value="F:metal ion binding"/>
    <property type="evidence" value="ECO:0007669"/>
    <property type="project" value="UniProtKB-KW"/>
</dbReference>
<dbReference type="GO" id="GO:0140693">
    <property type="term" value="F:molecular condensate scaffold activity"/>
    <property type="evidence" value="ECO:0000250"/>
    <property type="project" value="UniProtKB"/>
</dbReference>
<dbReference type="GO" id="GO:1990841">
    <property type="term" value="F:promoter-specific chromatin binding"/>
    <property type="evidence" value="ECO:0000250"/>
    <property type="project" value="UniProtKB"/>
</dbReference>
<dbReference type="GO" id="GO:0000978">
    <property type="term" value="F:RNA polymerase II cis-regulatory region sequence-specific DNA binding"/>
    <property type="evidence" value="ECO:0000250"/>
    <property type="project" value="UniProtKB"/>
</dbReference>
<dbReference type="GO" id="GO:0006915">
    <property type="term" value="P:apoptotic process"/>
    <property type="evidence" value="ECO:0007669"/>
    <property type="project" value="UniProtKB-KW"/>
</dbReference>
<dbReference type="GO" id="GO:0048512">
    <property type="term" value="P:circadian behavior"/>
    <property type="evidence" value="ECO:0000250"/>
    <property type="project" value="UniProtKB"/>
</dbReference>
<dbReference type="GO" id="GO:0006974">
    <property type="term" value="P:DNA damage response"/>
    <property type="evidence" value="ECO:0000250"/>
    <property type="project" value="UniProtKB"/>
</dbReference>
<dbReference type="GO" id="GO:0043153">
    <property type="term" value="P:entrainment of circadian clock by photoperiod"/>
    <property type="evidence" value="ECO:0000250"/>
    <property type="project" value="UniProtKB"/>
</dbReference>
<dbReference type="GO" id="GO:0045892">
    <property type="term" value="P:negative regulation of DNA-templated transcription"/>
    <property type="evidence" value="ECO:0000250"/>
    <property type="project" value="UniProtKB"/>
</dbReference>
<dbReference type="GO" id="GO:0045944">
    <property type="term" value="P:positive regulation of transcription by RNA polymerase II"/>
    <property type="evidence" value="ECO:0000250"/>
    <property type="project" value="UniProtKB"/>
</dbReference>
<dbReference type="GO" id="GO:0051262">
    <property type="term" value="P:protein tetramerization"/>
    <property type="evidence" value="ECO:0007669"/>
    <property type="project" value="InterPro"/>
</dbReference>
<dbReference type="CDD" id="cd08367">
    <property type="entry name" value="P53"/>
    <property type="match status" value="1"/>
</dbReference>
<dbReference type="FunFam" id="2.60.40.720:FF:000003">
    <property type="entry name" value="Cellular tumor antigen p53"/>
    <property type="match status" value="1"/>
</dbReference>
<dbReference type="Gene3D" id="2.60.40.720">
    <property type="match status" value="1"/>
</dbReference>
<dbReference type="Gene3D" id="6.10.50.20">
    <property type="match status" value="1"/>
</dbReference>
<dbReference type="Gene3D" id="4.10.170.10">
    <property type="entry name" value="p53-like tetramerisation domain"/>
    <property type="match status" value="1"/>
</dbReference>
<dbReference type="InterPro" id="IPR008967">
    <property type="entry name" value="p53-like_TF_DNA-bd_sf"/>
</dbReference>
<dbReference type="InterPro" id="IPR012346">
    <property type="entry name" value="p53/RUNT-type_TF_DNA-bd_sf"/>
</dbReference>
<dbReference type="InterPro" id="IPR011615">
    <property type="entry name" value="p53_DNA-bd"/>
</dbReference>
<dbReference type="InterPro" id="IPR036674">
    <property type="entry name" value="p53_tetramer_sf"/>
</dbReference>
<dbReference type="InterPro" id="IPR002117">
    <property type="entry name" value="p53_tumour_suppressor"/>
</dbReference>
<dbReference type="PANTHER" id="PTHR11447">
    <property type="entry name" value="CELLULAR TUMOR ANTIGEN P53"/>
    <property type="match status" value="1"/>
</dbReference>
<dbReference type="PANTHER" id="PTHR11447:SF6">
    <property type="entry name" value="CELLULAR TUMOR ANTIGEN P53"/>
    <property type="match status" value="1"/>
</dbReference>
<dbReference type="Pfam" id="PF00870">
    <property type="entry name" value="P53"/>
    <property type="match status" value="1"/>
</dbReference>
<dbReference type="PRINTS" id="PR00386">
    <property type="entry name" value="P53SUPPRESSR"/>
</dbReference>
<dbReference type="SUPFAM" id="SSF49417">
    <property type="entry name" value="p53-like transcription factors"/>
    <property type="match status" value="1"/>
</dbReference>
<dbReference type="PROSITE" id="PS00348">
    <property type="entry name" value="P53"/>
    <property type="match status" value="1"/>
</dbReference>
<proteinExistence type="evidence at transcript level"/>
<name>P53_OTOBE</name>
<protein>
    <recommendedName>
        <fullName>Cellular tumor antigen p53</fullName>
    </recommendedName>
    <alternativeName>
        <fullName>Tumor suppressor p53</fullName>
    </alternativeName>
</protein>
<evidence type="ECO:0000250" key="1"/>
<evidence type="ECO:0000250" key="2">
    <source>
        <dbReference type="UniProtKB" id="P02340"/>
    </source>
</evidence>
<evidence type="ECO:0000250" key="3">
    <source>
        <dbReference type="UniProtKB" id="P04637"/>
    </source>
</evidence>
<evidence type="ECO:0000250" key="4">
    <source>
        <dbReference type="UniProtKB" id="P10361"/>
    </source>
</evidence>
<evidence type="ECO:0000250" key="5">
    <source>
        <dbReference type="UniProtKB" id="Q9TUB2"/>
    </source>
</evidence>
<evidence type="ECO:0000256" key="6">
    <source>
        <dbReference type="SAM" id="MobiDB-lite"/>
    </source>
</evidence>
<evidence type="ECO:0000305" key="7"/>
<sequence length="314" mass="34618">DLWNLLPENNVLSPVLSPPMDDLLLSSEDVENWFDKGPDEALQMSAAPAPKAPTPAASTLAAPTPAISWPLSSSVPSQNTYPGVYGFRLGFIHSGTAKSVTCTYSPSLNKLFCQLAKTCPVQLWVDSTPPPGTRVRAMAIYKKSQHMTEVVRRCPHHERCSDSDGLAPPQHLIRVEGNLRAEYLDDRNTFRHSVVVPYEPPEVGSESTTIHYNYMCNSSCMGGMNRRPILTIITLEDSSGNLLGRNSFEVRVCACPGRDRRTEEENFRKRGEPCPEPPPGSTKRALPTGTNSSPQPKKKPLDGEYFTLKIRGRA</sequence>
<comment type="function">
    <text evidence="2 3">Multifunctional transcription factor that induces cell cycle arrest, DNA repair or apoptosis upon binding to its target DNA sequence. Acts as a tumor suppressor in many tumor types; induces growth arrest or apoptosis depending on the physiological circumstances and cell type. Negatively regulates cell division by controlling expression of a set of genes required for this process. One of the activated genes is an inhibitor of cyclin-dependent kinases. Apoptosis induction seems to be mediated either by stimulation of BAX and FAS antigen expression, or by repression of Bcl-2 expression. Its pro-apoptotic activity is activated via its interaction with PPP1R13B/ASPP1 or TP53BP2/ASPP2 (By similarity). However, this activity is inhibited when the interaction with PPP1R13B/ASPP1 or TP53BP2/ASPP2 is displaced by PPP1R13L/iASPP (By similarity). In cooperation with mitochondrial PPIF is involved in activating oxidative stress-induced necrosis; the function is largely independent of transcription. Prevents CDK7 kinase activity when associated to CAK complex in response to DNA damage, thus stopping cell cycle progression. Induces the transcription of long intergenic non-coding RNA p21 (lincRNA-p21) and lincRNA-Mkln1. LincRNA-p21 participates in TP53-dependent transcriptional repression leading to apoptosis and seems to have an effect on cell-cycle regulation. Regulates the circadian clock by repressing CLOCK-BMAL1-mediated transcriptional activation of PER2.</text>
</comment>
<comment type="cofactor">
    <cofactor evidence="1">
        <name>Zn(2+)</name>
        <dbReference type="ChEBI" id="CHEBI:29105"/>
    </cofactor>
    <text evidence="1">Binds 1 zinc ion per subunit.</text>
</comment>
<comment type="subunit">
    <text evidence="2 3 4 5">Forms homodimers and homotetramers (By similarity). Binds DNA as a homotetramer. Interacts with AXIN1. Probably part of a complex consisting of TP53, HIPK2 and AXIN1. Interacts with histone acetyltransferases EP300 and methyltransferases HRMT1L2 and CARM1, and recruits them to promoters. Interacts (via C-terminus) with TAF1; when TAF1 is part of the TFIID complex. Interacts with ING4; this interaction may be indirect. Found in a complex with CABLES1 and TP73. Interacts with HIPK1, HIPK2, and TP53INP1. Interacts with WWOX. Interacts with USP7 and SYVN1. Interacts with HSP90AB1. Interacts with CHD8; leading to recruit histone H1 and prevent transactivation activity. Interacts with ARMC10, BANP, CDKN2AIP, NUAK1, STK11/LKB1, UHRF2 and E4F. Interacts with YWHAZ; the interaction enhances TP53 transcriptional activity. Phosphorylation of YWHAZ on 'Ser-58' inhibits this interaction. Interacts (via DNA-binding domain) with MAML1 (via N-terminus). Interacts with MKRN1. Interacts with PML (via C-terminus). Interacts with MDM2; leading to ubiquitination and proteasomal degradation of TP53. Directly interacts with FBXO42; leading to ubiquitination and degradation of TP53. Interacts (phosphorylated at Ser-15 by ATM) with the phosphatase PP2A-PPP2R5C holoenzyme; regulates stress-induced TP53-dependent inhibition of cell proliferation. Interacts with PPP2R2A. Interacts with AURKA, DAXX, BRD7 and TRIM24. Interacts (when monomethylated at Lys-375) with L3MBTL1. Interacts with GRK5. Binds to the CAK complex (CDK7, cyclin H and MAT1) in response to DNA damage. Interacts with CDK5 in neurons. Interacts with AURKB, SETD2, UHRF2 and NOC2L. Interacts (via N-terminus) with PTK2/FAK1; this promotes ubiquitination by MDM2. Interacts with PTK2B/PYK2; this promotes ubiquitination by MDM2. Interacts with PRKCG. Interacts with PPIF; the association implicates preferentially tetrameric TP53, is induced by oxidative stress and is impaired by cyclosporin A (CsA). Interacts with SNAI1; the interaction induces SNAI1 degradation via MDM2-mediated ubiquitination and inhibits SNAI1-induced cell invasion. Interacts with UBC9. Interacts with ZNF385B; the interaction is direct. Interacts (via DNA-binding domain) with ZNF385A; the interaction is direct and enhances p53/TP53 transactivation functions on cell-cycle arrest target genes, resulting in growth arrest (By similarity). Interacts with ANKRD2. Interacts with RFFL and RNF34; involved in p53/TP53 ubiquitination. Interacts with MTA1 and COP1. Interacts with CCAR2 (via N-terminus). Interacts with MORC3. Interacts (via C-terminus) with POU4F2 (via C-terminus). Interacts (via oligomerization region) with NOP53; the interaction is direct and may prevent the MDM2-mediated proteasomal degradation of TP53. Interacts with AFG1L; mediates mitochondrial translocation of TP53. Interacts with UBD (By similarity). Interacts with TAF6 (By similarity). Interacts with C10orf90/FATS; the interaction inhibits binding of TP53 and MDM2 (By similarity). Interacts with NUPR1; interaction is stress-dependent. Forms a complex with EP300 and NUPR1; this complex binds CDKN1A promoter leading to transcriptional induction of CDKN1A (By similarity). Interacts with PRMT5 in response to DNA damage; the interaction is TTC5/STRAP dependent (By similarity). Interacts with PPP1R13L (via SH3 domain and ANK repeats); the interaction inhibits pro-apoptotic activity of p53/TP53 (By similarity). Interacts with PPP1R13B/ASPP1 and TP53BP2/ASPP2; the interactions promotes pro-apoptotic activity (By similarity). When phosphorylated at Ser-15, interacts with DDX3X and gamma-tubulin (By similarity). Interacts with KAT7/HBO1; leading to inhibit histone acetyltransferase activity of KAT7/HBO1 (By similarity). Interacts (via N-terminus) with E3 ubiquitin-protein ligase MUL1; the interaction results in ubiquitination of cytoplasmic TP53 at Lys-24 and subsequent proteasomal degradation (By similarity). Interacts with S100A4; this interaction promotes TP53 degradation (By similarity). Interacts with TTC5/STRAP; the interaction may result in increased mitochondrial-dependent apoptosis (By similarity). Interacts with NQO1; this interaction is NADH-dependent, stabilizes TP53 in response to oxidative stress and protects it from ubiquitin-independent degradation by the 20S proteasome (By similarity). Interacts with DAZAP2 at TP53 target gene promoters; the interaction is triggered by DNA damage and leads to modulation of the expression of a subset of TP53 target genes, reducing DNA damage-induced cell death by limiting the expression of cell death-mediating TP53 target genes (By similarity). Interacts (via N-terminus) with ZNF768 (via zinc-finger domains); interaction might be facilitated by TP53 oligomerization state (By similarity). Forms a ternary complex with ALDOB and G6PD; this interaction is direct. ALDOB stabilizes the complex inhibiting G6PD activity and keeping oxidative pentose phosphate metabolism in check (By similarity). Interacts with MORN3; the interactions mediate post-transcriptional modifications of TP53 by MDM2 and SIRT1 (By similarity). Interacts with HSPA9/MOT-2; the interaction promotes the degradation of TP53 (By similarity). Interacts with FBXO22; this interaction promotes TP53 proteasomal degradation (By similarity).</text>
</comment>
<comment type="subcellular location">
    <subcellularLocation>
        <location evidence="3">Cytoplasm</location>
    </subcellularLocation>
    <subcellularLocation>
        <location evidence="3">Nucleus</location>
    </subcellularLocation>
    <subcellularLocation>
        <location evidence="3">Nucleus</location>
        <location evidence="3">PML body</location>
    </subcellularLocation>
    <subcellularLocation>
        <location evidence="3">Endoplasmic reticulum</location>
    </subcellularLocation>
    <subcellularLocation>
        <location evidence="3">Mitochondrion matrix</location>
    </subcellularLocation>
    <subcellularLocation>
        <location evidence="3">Cytoplasm</location>
        <location evidence="3">Cytoskeleton</location>
        <location evidence="3">Microtubule organizing center</location>
        <location evidence="3">Centrosome</location>
    </subcellularLocation>
    <text evidence="3">Interaction with BANP promotes nuclear localization. Recruited into PML bodies together with CHEK2. Translocates to mitochondria upon oxidative stress. Translocates to mitochondria in response to mitomycin C treatment (By similarity). Competitive inhibition of TP53 interaction with HSPA9/MOT-2 by UBXN2A results in increased protein abundance and subsequent translocation of TP53 to the nucleus (By similarity).</text>
</comment>
<comment type="domain">
    <text evidence="3">The N-terminal and C-terminal disordered regions undergo liquid-liquid phase separation (LLPS) following homotetramerization and activation. Post-translational modifications, such as phosphorylation or lactylation affect the ability to undergo LLPS.</text>
</comment>
<comment type="domain">
    <text evidence="3">The nuclear export signal acts as a transcriptional repression domain. The TADI and TADII motifs (residues 17 to 25 and 48 to 56) correspond both to 9aaTAD motifs which are transactivation domains present in a large number of yeast and animal transcription factors.</text>
</comment>
<comment type="PTM">
    <text evidence="1">Phosphorylated by VRK1, which may prevent the interaction with MDM2. Phosphorylated by CHEK2 in response to DNA damage, which prevents ubiquitination by MDM2. Phosphorylated by PLK3 in response to reactive oxygen species (ROS), promoting p53/TP53-mediated apoptosis. Phosphorylated on Ser-13 by CDK7 in a CAK complex in response to DNA damage. Phosphorylated by CK2 following UV but not gamma irradiation. Stabilized by CDK5-mediated phosphorylation in response to genotoxic and oxidative stresses at Ser-13 and Ser-26, leading to accumulation of p53/TP53, particularly in the nucleus, thus inducing the transactivation of p53/TP53 target genes. Phosphorylated by DYRK2 at Ser-26 in response to genotoxic stress. Phosphorylated at Ser-293 by CDK2 in response to DNA-damage (By similarity).</text>
</comment>
<comment type="PTM">
    <text evidence="3">Monomethylated by SETD7, leading to stabilization and increased transcriptional activation. Monomethylated by SMYD2, leading to decreased DNA-binding activity and subsequent transcriptional regulation activity. Monomethylation by SETD7 prevents interaction with SMYD2 and subsequent monomethylation by SMYD2 (By similarity). Dimethylated by EHMT1 and EHMT2. Monomethylated by KMT5A, promoting interaction with L3MBTL1 and leading to repress transcriptional activity. Demethylation by KDM1A prevents interaction with TP53BP1 and represses TP53-mediated transcriptional activation (By similarity). Monomethylated at Arg-311 and dimethylated at Arg-313 by PRMT5; methylation is increased after DNA damage and might possibly affect TP53 target gene specificity (By similarity).</text>
</comment>
<comment type="PTM">
    <text evidence="1">Sumoylated with SUMO1.</text>
</comment>
<comment type="PTM">
    <text evidence="2 3">Ubiquitinated by MDM2 and SYVN1, which leads to proteasomal degradation. Ubiquitinated by RFWD3, which works in cooperation with MDM2 and may catalyze the formation of short polyubiquitin chains on p53/TP53 that are not targeted to the proteasome. Ubiquitinated by MKRN1, which leads to proteasomal degradation. Deubiquitinated by USP10, leading to stabilize it. Ubiquitinated by TRIM24, RFFL, RNF34 and RNF125, which leads to proteasomal degradation. Ubiquitination by TOPORS induces degradation. Deubiquitination by USP7, leading to stabilize it. Ubiquitinated by COP1, which leads to proteasomal degradation (By similarity). Ubiquitination and subsequent proteasomal degradation is negatively regulated by CCAR2 (By similarity). Polyubiquitinated by C10orf90/FATS, polyubiquitination is 'Lys-48'-linkage independent and non-proteolytic, leading to TP53 stabilization (By similarity). Deubiquitinated by USP3, leading to stabilization (By similarity). Ubiquitinated by MSL2, promoting its cytoplasmic localization (By similarity). Also ubiquitinated by the SCF(FBXO22)-KDMA4A complex; leading to proteasomal degradation (By similarity).</text>
</comment>
<comment type="PTM">
    <text evidence="3">Lactylation by AARS1 prevents ability to undergo liquid-liquid phase separation (LLPS), thereby inhibiting transcription factor activity.</text>
</comment>
<comment type="disease">
    <text>p53 is found in increased amounts in a wide variety of transformed cells. p53 is frequently mutated or inactivated in many types of cancer.</text>
</comment>
<comment type="similarity">
    <text evidence="7">Belongs to the p53 family.</text>
</comment>
<feature type="chain" id="PRO_0000185714" description="Cellular tumor antigen p53">
    <location>
        <begin position="1" status="less than"/>
        <end position="314" status="greater than"/>
    </location>
</feature>
<feature type="DNA-binding region" evidence="3">
    <location>
        <begin position="80"/>
        <end position="270"/>
    </location>
</feature>
<feature type="region of interest" description="Transcription activation (acidic)">
    <location>
        <begin position="1" status="less than"/>
        <end position="24"/>
    </location>
</feature>
<feature type="region of interest" description="Interaction with WWOX" evidence="1">
    <location>
        <begin position="44"/>
        <end position="88"/>
    </location>
</feature>
<feature type="region of interest" description="Required for interaction with ZNF385A" evidence="1">
    <location>
        <begin position="78"/>
        <end position="278"/>
    </location>
</feature>
<feature type="region of interest" description="Required for interaction with FBXO42" evidence="1">
    <location>
        <begin position="91"/>
        <end position="214"/>
    </location>
</feature>
<feature type="region of interest" description="Interaction with E4F1" evidence="1">
    <location>
        <begin position="234"/>
        <end position="272"/>
    </location>
</feature>
<feature type="region of interest" description="Interaction with DNA" evidence="1">
    <location>
        <begin position="251"/>
        <end position="258"/>
    </location>
</feature>
<feature type="region of interest" description="Disordered" evidence="6">
    <location>
        <begin position="261"/>
        <end position="306"/>
    </location>
</feature>
<feature type="region of interest" description="Oligomerization">
    <location>
        <begin position="303"/>
        <end position="314" status="greater than"/>
    </location>
</feature>
<feature type="short sequence motif" description="Bipartite nuclear localization signal" evidence="1">
    <location>
        <begin position="283"/>
        <end position="299"/>
    </location>
</feature>
<feature type="compositionally biased region" description="Basic and acidic residues" evidence="6">
    <location>
        <begin position="261"/>
        <end position="273"/>
    </location>
</feature>
<feature type="binding site" evidence="3">
    <location>
        <position position="154"/>
    </location>
    <ligand>
        <name>Zn(2+)</name>
        <dbReference type="ChEBI" id="CHEBI:29105"/>
    </ligand>
</feature>
<feature type="binding site" evidence="3">
    <location>
        <position position="157"/>
    </location>
    <ligand>
        <name>Zn(2+)</name>
        <dbReference type="ChEBI" id="CHEBI:29105"/>
    </ligand>
</feature>
<feature type="binding site" evidence="3">
    <location>
        <position position="216"/>
    </location>
    <ligand>
        <name>Zn(2+)</name>
        <dbReference type="ChEBI" id="CHEBI:29105"/>
    </ligand>
</feature>
<feature type="binding site" evidence="3">
    <location>
        <position position="220"/>
    </location>
    <ligand>
        <name>Zn(2+)</name>
        <dbReference type="ChEBI" id="CHEBI:29105"/>
    </ligand>
</feature>
<feature type="site" description="Interaction with DNA" evidence="3">
    <location>
        <position position="98"/>
    </location>
</feature>
<feature type="modified residue" description="Phosphoserine; by CDK5 and CDK7" evidence="3">
    <location>
        <position position="13"/>
    </location>
</feature>
<feature type="modified residue" description="Phosphoserine; by MAPKAPK5" evidence="3">
    <location>
        <position position="17"/>
    </location>
</feature>
<feature type="modified residue" description="Phosphoserine; by CDK5, DYRK2, HIPK2 and PKC/PRKCG" evidence="3">
    <location>
        <position position="26"/>
    </location>
</feature>
<feature type="modified residue" description="N6-acetyllysine" evidence="3">
    <location>
        <position position="98"/>
    </location>
</feature>
<feature type="modified residue" description="N6-lactoyllysine" evidence="3">
    <location>
        <position position="98"/>
    </location>
</feature>
<feature type="modified residue" description="N6-lactoyllysine" evidence="3">
    <location>
        <position position="117"/>
    </location>
</feature>
<feature type="modified residue" description="Phosphoserine" evidence="3">
    <location>
        <position position="161"/>
    </location>
</feature>
<feature type="modified residue" description="Phosphoserine" evidence="3">
    <location>
        <position position="247"/>
    </location>
</feature>
<feature type="modified residue" description="Phosphothreonine" evidence="3">
    <location>
        <position position="262"/>
    </location>
</feature>
<feature type="modified residue" description="N6-acetyllysine" evidence="3">
    <location>
        <position position="283"/>
    </location>
</feature>
<feature type="modified residue" description="Phosphoserine; by AURKA, CDK1 and CDK2" evidence="3">
    <location>
        <position position="293"/>
    </location>
</feature>
<feature type="modified residue" description="N6-acetyllysine" evidence="2">
    <location>
        <position position="299"/>
    </location>
</feature>
<feature type="modified residue" description="Omega-N-methylarginine" evidence="3">
    <location>
        <position position="311"/>
    </location>
</feature>
<feature type="modified residue" description="Symmetric dimethylarginine" evidence="3">
    <location>
        <position position="313"/>
    </location>
</feature>
<feature type="cross-link" description="Glycyl lysine isopeptide (Lys-Gly) (interchain with G-Cter in ubiquitin)" evidence="3">
    <location>
        <position position="269"/>
    </location>
</feature>
<feature type="non-terminal residue">
    <location>
        <position position="1"/>
    </location>
</feature>
<feature type="non-terminal residue">
    <location>
        <position position="314"/>
    </location>
</feature>